<comment type="function">
    <text evidence="1">Catalyzes carboxymethyl transfer from carboxy-S-adenosyl-L-methionine (Cx-SAM) to 5-hydroxyuridine (ho5U) to form 5-carboxymethoxyuridine (cmo5U) at position 34 in tRNAs.</text>
</comment>
<comment type="catalytic activity">
    <reaction evidence="1">
        <text>carboxy-S-adenosyl-L-methionine + 5-hydroxyuridine(34) in tRNA = 5-carboxymethoxyuridine(34) in tRNA + S-adenosyl-L-homocysteine + H(+)</text>
        <dbReference type="Rhea" id="RHEA:52848"/>
        <dbReference type="Rhea" id="RHEA-COMP:13381"/>
        <dbReference type="Rhea" id="RHEA-COMP:13383"/>
        <dbReference type="ChEBI" id="CHEBI:15378"/>
        <dbReference type="ChEBI" id="CHEBI:57856"/>
        <dbReference type="ChEBI" id="CHEBI:134278"/>
        <dbReference type="ChEBI" id="CHEBI:136877"/>
        <dbReference type="ChEBI" id="CHEBI:136879"/>
    </reaction>
</comment>
<comment type="subunit">
    <text evidence="1">Homotetramer.</text>
</comment>
<comment type="similarity">
    <text evidence="1">Belongs to the class I-like SAM-binding methyltransferase superfamily. CmoB family.</text>
</comment>
<proteinExistence type="inferred from homology"/>
<sequence>MFNFANFYQLIAQDTRLQPWLNVLPQQLTDWQNAEHGDFGRWLKALNKIPEGSPDQVDIKNSVTISNDTPFHEGELKKLENLLRTFHPWRKGPYTVHGIHIDTEWRSDWKWDRVLPHISPLKNRSVLDVGCGNGYHMWRMLGEGARLCVGIDPSHLFLIQFEAIRKLMGGDQRAHLLPLGIEQLPKLEAFDTVFSMGVLYHRRSPLDHLIQLKDQLVSGGELVLETLVIEGDENAVLVPTSRYAQMRNVYFFPSAKALKVWLELVGFEDVHIVDENVTSVDEQRTTDWMTHNSLPDYLDPNDPSKTVEGYPAPRRAVLVARKP</sequence>
<keyword id="KW-0808">Transferase</keyword>
<keyword id="KW-0819">tRNA processing</keyword>
<evidence type="ECO:0000255" key="1">
    <source>
        <dbReference type="HAMAP-Rule" id="MF_01590"/>
    </source>
</evidence>
<feature type="chain" id="PRO_0000313988" description="tRNA U34 carboxymethyltransferase">
    <location>
        <begin position="1"/>
        <end position="323"/>
    </location>
</feature>
<feature type="binding site" evidence="1">
    <location>
        <position position="91"/>
    </location>
    <ligand>
        <name>carboxy-S-adenosyl-L-methionine</name>
        <dbReference type="ChEBI" id="CHEBI:134278"/>
    </ligand>
</feature>
<feature type="binding site" evidence="1">
    <location>
        <position position="105"/>
    </location>
    <ligand>
        <name>carboxy-S-adenosyl-L-methionine</name>
        <dbReference type="ChEBI" id="CHEBI:134278"/>
    </ligand>
</feature>
<feature type="binding site" evidence="1">
    <location>
        <position position="110"/>
    </location>
    <ligand>
        <name>carboxy-S-adenosyl-L-methionine</name>
        <dbReference type="ChEBI" id="CHEBI:134278"/>
    </ligand>
</feature>
<feature type="binding site" evidence="1">
    <location>
        <position position="130"/>
    </location>
    <ligand>
        <name>carboxy-S-adenosyl-L-methionine</name>
        <dbReference type="ChEBI" id="CHEBI:134278"/>
    </ligand>
</feature>
<feature type="binding site" evidence="1">
    <location>
        <begin position="152"/>
        <end position="154"/>
    </location>
    <ligand>
        <name>carboxy-S-adenosyl-L-methionine</name>
        <dbReference type="ChEBI" id="CHEBI:134278"/>
    </ligand>
</feature>
<feature type="binding site" evidence="1">
    <location>
        <begin position="181"/>
        <end position="182"/>
    </location>
    <ligand>
        <name>carboxy-S-adenosyl-L-methionine</name>
        <dbReference type="ChEBI" id="CHEBI:134278"/>
    </ligand>
</feature>
<feature type="binding site" evidence="1">
    <location>
        <position position="196"/>
    </location>
    <ligand>
        <name>carboxy-S-adenosyl-L-methionine</name>
        <dbReference type="ChEBI" id="CHEBI:134278"/>
    </ligand>
</feature>
<feature type="binding site" evidence="1">
    <location>
        <position position="200"/>
    </location>
    <ligand>
        <name>carboxy-S-adenosyl-L-methionine</name>
        <dbReference type="ChEBI" id="CHEBI:134278"/>
    </ligand>
</feature>
<feature type="binding site" evidence="1">
    <location>
        <position position="315"/>
    </location>
    <ligand>
        <name>carboxy-S-adenosyl-L-methionine</name>
        <dbReference type="ChEBI" id="CHEBI:134278"/>
    </ligand>
</feature>
<gene>
    <name evidence="1" type="primary">cmoB</name>
    <name type="ordered locus">VP1044</name>
</gene>
<dbReference type="EC" id="2.5.1.-" evidence="1"/>
<dbReference type="EMBL" id="BA000031">
    <property type="protein sequence ID" value="BAC59307.1"/>
    <property type="molecule type" value="Genomic_DNA"/>
</dbReference>
<dbReference type="RefSeq" id="NP_797423.1">
    <property type="nucleotide sequence ID" value="NC_004603.1"/>
</dbReference>
<dbReference type="RefSeq" id="WP_005483112.1">
    <property type="nucleotide sequence ID" value="NC_004603.1"/>
</dbReference>
<dbReference type="SMR" id="Q87QV5"/>
<dbReference type="GeneID" id="1188548"/>
<dbReference type="KEGG" id="vpa:VP1044"/>
<dbReference type="PATRIC" id="fig|223926.6.peg.988"/>
<dbReference type="eggNOG" id="COG0500">
    <property type="taxonomic scope" value="Bacteria"/>
</dbReference>
<dbReference type="HOGENOM" id="CLU_052665_0_0_6"/>
<dbReference type="Proteomes" id="UP000002493">
    <property type="component" value="Chromosome 1"/>
</dbReference>
<dbReference type="GO" id="GO:0008168">
    <property type="term" value="F:methyltransferase activity"/>
    <property type="evidence" value="ECO:0007669"/>
    <property type="project" value="TreeGrafter"/>
</dbReference>
<dbReference type="GO" id="GO:0016765">
    <property type="term" value="F:transferase activity, transferring alkyl or aryl (other than methyl) groups"/>
    <property type="evidence" value="ECO:0007669"/>
    <property type="project" value="UniProtKB-UniRule"/>
</dbReference>
<dbReference type="GO" id="GO:0002098">
    <property type="term" value="P:tRNA wobble uridine modification"/>
    <property type="evidence" value="ECO:0007669"/>
    <property type="project" value="InterPro"/>
</dbReference>
<dbReference type="CDD" id="cd02440">
    <property type="entry name" value="AdoMet_MTases"/>
    <property type="match status" value="1"/>
</dbReference>
<dbReference type="Gene3D" id="3.40.50.150">
    <property type="entry name" value="Vaccinia Virus protein VP39"/>
    <property type="match status" value="1"/>
</dbReference>
<dbReference type="HAMAP" id="MF_01590">
    <property type="entry name" value="tRNA_carboxymethyltr_CmoB"/>
    <property type="match status" value="1"/>
</dbReference>
<dbReference type="InterPro" id="IPR010017">
    <property type="entry name" value="CmoB"/>
</dbReference>
<dbReference type="InterPro" id="IPR027555">
    <property type="entry name" value="Mo5U34_MeTrfas-like"/>
</dbReference>
<dbReference type="InterPro" id="IPR029063">
    <property type="entry name" value="SAM-dependent_MTases_sf"/>
</dbReference>
<dbReference type="NCBIfam" id="NF011650">
    <property type="entry name" value="PRK15068.1"/>
    <property type="match status" value="1"/>
</dbReference>
<dbReference type="NCBIfam" id="TIGR00452">
    <property type="entry name" value="tRNA 5-methoxyuridine(34)/uridine 5-oxyacetic acid(34) synthase CmoB"/>
    <property type="match status" value="1"/>
</dbReference>
<dbReference type="PANTHER" id="PTHR43464">
    <property type="entry name" value="METHYLTRANSFERASE"/>
    <property type="match status" value="1"/>
</dbReference>
<dbReference type="PANTHER" id="PTHR43464:SF95">
    <property type="entry name" value="TRNA U34 CARBOXYMETHYLTRANSFERASE"/>
    <property type="match status" value="1"/>
</dbReference>
<dbReference type="Pfam" id="PF08003">
    <property type="entry name" value="Methyltransf_9"/>
    <property type="match status" value="1"/>
</dbReference>
<dbReference type="SUPFAM" id="SSF53335">
    <property type="entry name" value="S-adenosyl-L-methionine-dependent methyltransferases"/>
    <property type="match status" value="1"/>
</dbReference>
<protein>
    <recommendedName>
        <fullName evidence="1">tRNA U34 carboxymethyltransferase</fullName>
        <ecNumber evidence="1">2.5.1.-</ecNumber>
    </recommendedName>
</protein>
<name>CMOB_VIBPA</name>
<accession>Q87QV5</accession>
<reference key="1">
    <citation type="journal article" date="2003" name="Lancet">
        <title>Genome sequence of Vibrio parahaemolyticus: a pathogenic mechanism distinct from that of V. cholerae.</title>
        <authorList>
            <person name="Makino K."/>
            <person name="Oshima K."/>
            <person name="Kurokawa K."/>
            <person name="Yokoyama K."/>
            <person name="Uda T."/>
            <person name="Tagomori K."/>
            <person name="Iijima Y."/>
            <person name="Najima M."/>
            <person name="Nakano M."/>
            <person name="Yamashita A."/>
            <person name="Kubota Y."/>
            <person name="Kimura S."/>
            <person name="Yasunaga T."/>
            <person name="Honda T."/>
            <person name="Shinagawa H."/>
            <person name="Hattori M."/>
            <person name="Iida T."/>
        </authorList>
    </citation>
    <scope>NUCLEOTIDE SEQUENCE [LARGE SCALE GENOMIC DNA]</scope>
    <source>
        <strain>RIMD 2210633</strain>
    </source>
</reference>
<organism>
    <name type="scientific">Vibrio parahaemolyticus serotype O3:K6 (strain RIMD 2210633)</name>
    <dbReference type="NCBI Taxonomy" id="223926"/>
    <lineage>
        <taxon>Bacteria</taxon>
        <taxon>Pseudomonadati</taxon>
        <taxon>Pseudomonadota</taxon>
        <taxon>Gammaproteobacteria</taxon>
        <taxon>Vibrionales</taxon>
        <taxon>Vibrionaceae</taxon>
        <taxon>Vibrio</taxon>
    </lineage>
</organism>